<accession>P0DJA3</accession>
<accession>Q06487</accession>
<accession>Q5NQK6</accession>
<accession>Q60114</accession>
<accession>Q60116</accession>
<feature type="chain" id="PRO_0000057721" description="Levansucrase">
    <location>
        <begin position="1"/>
        <end position="423"/>
    </location>
</feature>
<feature type="active site" description="Nucleophile" evidence="1">
    <location>
        <position position="48"/>
    </location>
</feature>
<feature type="active site" description="Proton donor/acceptor" evidence="1">
    <location>
        <position position="278"/>
    </location>
</feature>
<feature type="binding site" evidence="1">
    <location>
        <position position="47"/>
    </location>
    <ligand>
        <name>sucrose</name>
        <dbReference type="ChEBI" id="CHEBI:17992"/>
    </ligand>
</feature>
<feature type="binding site" evidence="1">
    <location>
        <position position="48"/>
    </location>
    <ligand>
        <name>sucrose</name>
        <dbReference type="ChEBI" id="CHEBI:17992"/>
    </ligand>
</feature>
<feature type="binding site" evidence="1">
    <location>
        <position position="119"/>
    </location>
    <ligand>
        <name>sucrose</name>
        <dbReference type="ChEBI" id="CHEBI:17992"/>
    </ligand>
</feature>
<feature type="binding site" evidence="1">
    <location>
        <position position="193"/>
    </location>
    <ligand>
        <name>sucrose</name>
        <dbReference type="ChEBI" id="CHEBI:17992"/>
    </ligand>
</feature>
<feature type="binding site" evidence="1">
    <location>
        <position position="194"/>
    </location>
    <ligand>
        <name>sucrose</name>
        <dbReference type="ChEBI" id="CHEBI:17992"/>
    </ligand>
</feature>
<feature type="site" description="Transition state stabilizer" evidence="1">
    <location>
        <position position="194"/>
    </location>
</feature>
<feature type="mutagenesis site" description="Exhibits kinetic parameters and transfructosylation activity that are almost the same as those of the wild-type enzyme, but is unable to catalyze the synthesis of highly polymerized fructans." evidence="2">
    <original>W</original>
    <variation>R</variation>
    <location>
        <position position="80"/>
    </location>
</feature>
<feature type="mutagenesis site" description="Does not affect sucrose hydrolase activity. Exhibits greater transfructosylating activity." evidence="2">
    <original>E</original>
    <variation>Q</variation>
    <location>
        <position position="117"/>
    </location>
</feature>
<feature type="mutagenesis site" description="Abolishes sucrose hydrolysis." evidence="2">
    <original>D</original>
    <variation>A</variation>
    <variation>E</variation>
    <variation>H</variation>
    <variation>Q</variation>
    <variation>S</variation>
    <location>
        <position position="194"/>
    </location>
</feature>
<feature type="mutagenesis site" description="Abolishes sucrose hydrolysis. 3-fold increase in KM for sucrose. Transfructosylating activity is not affected." evidence="2">
    <original>D</original>
    <variation>N</variation>
    <location>
        <position position="194"/>
    </location>
</feature>
<feature type="mutagenesis site" description="Retains 28% of the sucrose hydrolase activity, but transfructosylating activity is greatly reduced." evidence="2">
    <original>E</original>
    <variation>Q</variation>
    <location>
        <position position="211"/>
    </location>
</feature>
<feature type="mutagenesis site" description="8-fold increase in KM for sucrose. Shows higher activity toward stachyose." evidence="2">
    <original>V</original>
    <variation>A</variation>
    <location>
        <position position="223"/>
    </location>
</feature>
<feature type="mutagenesis site" description="No change in activity." evidence="2">
    <original>D</original>
    <variation>N</variation>
    <location>
        <position position="275"/>
    </location>
</feature>
<feature type="mutagenesis site" description="30-fold decrease in kcat for sucrose hydrolysis. KM for sucrose and transfructosylating activity are only slightly affected." evidence="2">
    <original>E</original>
    <variation>D</variation>
    <location>
        <position position="278"/>
    </location>
</feature>
<feature type="mutagenesis site" description="210-fold decrease in kcat for sucrose hydrolysis. 3-fold increase in KM for sucrose." evidence="2">
    <original>E</original>
    <variation>H</variation>
    <location>
        <position position="278"/>
    </location>
</feature>
<feature type="mutagenesis site" description="Decreases both transfructosylating and hydrolyzing activities." evidence="2">
    <original>H</original>
    <variation>K</variation>
    <variation>R</variation>
    <location>
        <position position="296"/>
    </location>
</feature>
<feature type="mutagenesis site" description="No change in activity." evidence="2">
    <original>D</original>
    <variation>N</variation>
    <location>
        <position position="302"/>
    </location>
</feature>
<feature type="mutagenesis site" description="No change in activity." evidence="2">
    <original>D</original>
    <variation>N</variation>
    <location>
        <position position="308"/>
    </location>
</feature>
<feature type="sequence conflict" description="In Ref. 1; BAA04475." evidence="5" ref="1">
    <original>V</original>
    <variation>I</variation>
    <location>
        <position position="39"/>
    </location>
</feature>
<feature type="sequence conflict" description="In Ref. 2; AAG29870." evidence="5" ref="2">
    <original>NPED</original>
    <variation>TPKI</variation>
    <location>
        <begin position="200"/>
        <end position="203"/>
    </location>
</feature>
<feature type="sequence conflict" description="In Ref. 1; BAA04475." evidence="5" ref="1">
    <original>E</original>
    <variation>Q</variation>
    <location>
        <position position="217"/>
    </location>
</feature>
<feature type="sequence conflict" description="In Ref. 1; BAA04475." evidence="5" ref="1">
    <original>T</original>
    <variation>A</variation>
    <location>
        <position position="220"/>
    </location>
</feature>
<feature type="sequence conflict" description="In Ref. 1; BAA04475." evidence="5" ref="1">
    <original>C</original>
    <variation>Y</variation>
    <location>
        <position position="244"/>
    </location>
</feature>
<feature type="sequence conflict" description="In Ref. 1; BAA04475." evidence="5" ref="1">
    <original>I</original>
    <variation>V</variation>
    <location>
        <position position="379"/>
    </location>
</feature>
<reference key="1">
    <citation type="journal article" date="1995" name="Biosci. Biotechnol. Biochem.">
        <title>Cloning and characterization of Zymomonas mobilis genes encoding extracellular levansucrase and invertase.</title>
        <authorList>
            <person name="Kyono K."/>
            <person name="Yanase H."/>
            <person name="Tonomura K."/>
            <person name="Kawasaki H."/>
            <person name="Sakai T."/>
        </authorList>
    </citation>
    <scope>NUCLEOTIDE SEQUENCE [GENOMIC DNA]</scope>
    <scope>PARTIAL PROTEIN SEQUENCE</scope>
    <source>
        <strain>ATCC 29191 / DSM 3580 / JCM 10190 / CECT 560 / NBRC 13756 / NCIMB 11199 / NRRL B-4490 / ZM6</strain>
    </source>
</reference>
<reference key="2">
    <citation type="submission" date="2000-10" db="EMBL/GenBank/DDBJ databases">
        <title>Sequence analysis of 44B6 fosmid clone of Zymomonas mobilis ZM4.</title>
        <authorList>
            <person name="Ahn J.Y."/>
            <person name="Kang H.S."/>
        </authorList>
    </citation>
    <scope>NUCLEOTIDE SEQUENCE [GENOMIC DNA]</scope>
    <source>
        <strain>ATCC 31821 / ZM4 / CP4</strain>
    </source>
</reference>
<reference key="3">
    <citation type="journal article" date="2005" name="Nat. Biotechnol.">
        <title>The genome sequence of the ethanologenic bacterium Zymomonas mobilis ZM4.</title>
        <authorList>
            <person name="Seo J.-S."/>
            <person name="Chong H."/>
            <person name="Park H.S."/>
            <person name="Yoon K.-O."/>
            <person name="Jung C."/>
            <person name="Kim J.J."/>
            <person name="Hong J.H."/>
            <person name="Kim H."/>
            <person name="Kim J.-H."/>
            <person name="Kil J.-I."/>
            <person name="Park C.J."/>
            <person name="Oh H.-M."/>
            <person name="Lee J.-S."/>
            <person name="Jin S.-J."/>
            <person name="Um H.-W."/>
            <person name="Lee H.-J."/>
            <person name="Oh S.-J."/>
            <person name="Kim J.Y."/>
            <person name="Kang H.L."/>
            <person name="Lee S.Y."/>
            <person name="Lee K.J."/>
            <person name="Kang H.S."/>
        </authorList>
    </citation>
    <scope>NUCLEOTIDE SEQUENCE [LARGE SCALE GENOMIC DNA]</scope>
    <source>
        <strain>ATCC 31821 / ZM4 / CP4</strain>
    </source>
</reference>
<reference key="4">
    <citation type="journal article" date="2002" name="J. Biochem.">
        <title>Identification of functionally important amino acid residues in Zymomonas mobilis levansucrase.</title>
        <authorList>
            <person name="Yanase H."/>
            <person name="Maeda M."/>
            <person name="Hagiwara E."/>
            <person name="Yagi H."/>
            <person name="Taniguchi K."/>
            <person name="Okamoto K."/>
        </authorList>
    </citation>
    <scope>FUNCTION</scope>
    <scope>CATALYTIC ACTIVITY</scope>
    <scope>BIOPHYSICOCHEMICAL PROPERTIES</scope>
    <scope>MUTAGENESIS OF TRP-80; GLU-117; ASP-194; GLU-211; VAL-223; ASP-275; GLU-278; HIS-296; ASP-302 AND ASP-308</scope>
</reference>
<proteinExistence type="evidence at protein level"/>
<organism>
    <name type="scientific">Zymomonas mobilis subsp. mobilis (strain ATCC 31821 / ZM4 / CP4)</name>
    <dbReference type="NCBI Taxonomy" id="264203"/>
    <lineage>
        <taxon>Bacteria</taxon>
        <taxon>Pseudomonadati</taxon>
        <taxon>Pseudomonadota</taxon>
        <taxon>Alphaproteobacteria</taxon>
        <taxon>Sphingomonadales</taxon>
        <taxon>Zymomonadaceae</taxon>
        <taxon>Zymomonas</taxon>
    </lineage>
</organism>
<evidence type="ECO:0000250" key="1">
    <source>
        <dbReference type="UniProtKB" id="P05655"/>
    </source>
</evidence>
<evidence type="ECO:0000269" key="2">
    <source>
    </source>
</evidence>
<evidence type="ECO:0000303" key="3">
    <source>
    </source>
</evidence>
<evidence type="ECO:0000303" key="4">
    <source ref="2"/>
</evidence>
<evidence type="ECO:0000305" key="5"/>
<evidence type="ECO:0000305" key="6">
    <source>
    </source>
</evidence>
<evidence type="ECO:0000312" key="7">
    <source>
        <dbReference type="EMBL" id="AAV88998.1"/>
    </source>
</evidence>
<gene>
    <name type="primary">sacB</name>
    <name evidence="4" type="synonym">levU</name>
    <name evidence="3" type="synonym">sucZE2</name>
    <name evidence="7" type="ordered locus">ZMO0374</name>
</gene>
<keyword id="KW-0119">Carbohydrate metabolism</keyword>
<keyword id="KW-0903">Direct protein sequencing</keyword>
<keyword id="KW-0328">Glycosyltransferase</keyword>
<keyword id="KW-1185">Reference proteome</keyword>
<keyword id="KW-0964">Secreted</keyword>
<keyword id="KW-0808">Transferase</keyword>
<name>LSC_ZYMMO</name>
<comment type="function">
    <text evidence="2">Catalyzes the synthesis of levan, a fructose polymer, by transferring the fructosyl moiety from sucrose to a growing acceptor molecule (PubMed:12359071). Can also cleave raffinose and stachyose, but does not cleave 1-kestose, nystose, levan and inulin (PubMed:12359071). Also displays sucrose hydrolase activity (PubMed:12359071).</text>
</comment>
<comment type="catalytic activity">
    <reaction evidence="2">
        <text>[6)-beta-D-fructofuranosyl-(2-&gt;](n) alpha-D-glucopyranoside + sucrose = [6)-beta-D-fructofuranosyl-(2-&gt;](n+1) alpha-D-glucopyranoside + D-glucose</text>
        <dbReference type="Rhea" id="RHEA:13653"/>
        <dbReference type="Rhea" id="RHEA-COMP:13093"/>
        <dbReference type="Rhea" id="RHEA-COMP:13094"/>
        <dbReference type="ChEBI" id="CHEBI:4167"/>
        <dbReference type="ChEBI" id="CHEBI:17992"/>
        <dbReference type="ChEBI" id="CHEBI:134464"/>
        <dbReference type="EC" id="2.4.1.10"/>
    </reaction>
</comment>
<comment type="biophysicochemical properties">
    <kinetics>
        <KM evidence="2">125 mM for sucrose</KM>
        <text evidence="2">kcat is 1700 min(-1) for sucrose hydrolase activity.</text>
    </kinetics>
</comment>
<comment type="subcellular location">
    <subcellularLocation>
        <location evidence="6">Secreted</location>
    </subcellularLocation>
</comment>
<comment type="PTM">
    <text evidence="6">Does not seem to be N-terminally processed.</text>
</comment>
<comment type="similarity">
    <text evidence="5">Belongs to the glycosyl hydrolase 68 family.</text>
</comment>
<protein>
    <recommendedName>
        <fullName evidence="3">Levansucrase</fullName>
        <ecNumber evidence="2">2.4.1.10</ecNumber>
    </recommendedName>
    <alternativeName>
        <fullName>Beta-D-fructofuranosyl transferase</fullName>
    </alternativeName>
    <alternativeName>
        <fullName>Sucrose 6-fructosyl transferase</fullName>
    </alternativeName>
</protein>
<dbReference type="EC" id="2.4.1.10" evidence="2"/>
<dbReference type="EMBL" id="D17524">
    <property type="protein sequence ID" value="BAA04475.1"/>
    <property type="molecule type" value="Genomic_DNA"/>
</dbReference>
<dbReference type="EMBL" id="AF313764">
    <property type="protein sequence ID" value="AAG29870.1"/>
    <property type="molecule type" value="Genomic_DNA"/>
</dbReference>
<dbReference type="EMBL" id="AE008692">
    <property type="protein sequence ID" value="AAV88998.1"/>
    <property type="molecule type" value="Genomic_DNA"/>
</dbReference>
<dbReference type="PIR" id="JC2519">
    <property type="entry name" value="JC2519"/>
</dbReference>
<dbReference type="RefSeq" id="WP_011240294.1">
    <property type="nucleotide sequence ID" value="NZ_CP035711.1"/>
</dbReference>
<dbReference type="SMR" id="P0DJA3"/>
<dbReference type="STRING" id="264203.ZMO0374"/>
<dbReference type="CAZy" id="GH68">
    <property type="family name" value="Glycoside Hydrolase Family 68"/>
</dbReference>
<dbReference type="KEGG" id="zmo:ZMO0374"/>
<dbReference type="eggNOG" id="COG1621">
    <property type="taxonomic scope" value="Bacteria"/>
</dbReference>
<dbReference type="HOGENOM" id="CLU_031862_1_0_5"/>
<dbReference type="BRENDA" id="2.4.1.10">
    <property type="organism ID" value="14380"/>
</dbReference>
<dbReference type="Proteomes" id="UP000001173">
    <property type="component" value="Chromosome"/>
</dbReference>
<dbReference type="GO" id="GO:0005576">
    <property type="term" value="C:extracellular region"/>
    <property type="evidence" value="ECO:0007669"/>
    <property type="project" value="UniProtKB-SubCell"/>
</dbReference>
<dbReference type="GO" id="GO:0050053">
    <property type="term" value="F:levansucrase activity"/>
    <property type="evidence" value="ECO:0007669"/>
    <property type="project" value="UniProtKB-EC"/>
</dbReference>
<dbReference type="GO" id="GO:0009758">
    <property type="term" value="P:carbohydrate utilization"/>
    <property type="evidence" value="ECO:0007669"/>
    <property type="project" value="InterPro"/>
</dbReference>
<dbReference type="CDD" id="cd08997">
    <property type="entry name" value="GH68"/>
    <property type="match status" value="1"/>
</dbReference>
<dbReference type="Gene3D" id="2.115.10.20">
    <property type="entry name" value="Glycosyl hydrolase domain, family 43"/>
    <property type="match status" value="1"/>
</dbReference>
<dbReference type="InterPro" id="IPR003469">
    <property type="entry name" value="Glyco_hydro_68"/>
</dbReference>
<dbReference type="InterPro" id="IPR023296">
    <property type="entry name" value="Glyco_hydro_beta-prop_sf"/>
</dbReference>
<dbReference type="Pfam" id="PF02435">
    <property type="entry name" value="Glyco_hydro_68"/>
    <property type="match status" value="1"/>
</dbReference>
<dbReference type="SUPFAM" id="SSF75005">
    <property type="entry name" value="Arabinanase/levansucrase/invertase"/>
    <property type="match status" value="1"/>
</dbReference>
<sequence length="423" mass="46762">MLNKAGIAEPSLWTRADAMKVHTDDPTATMPTIDYDFPVMTDKYWVWDTWPLRDINGQVVSFQGWSVIFALVADRTKYGWHNRNDGARIGYFYSRGGSNWIFGGHLLKDGANPRSWEWSGCTIMAPGTANSVEVFFTSVNDTPSESVPAQCKGYIYADDKSVWFDGFDKVTDLFQADGLYYADYAENNFWDFRDPHVFINPEDGKTYALFEGNVAMERGTVAVGEEEIGPVPPKTETPDGARYCAAAIGIAQALNEARTEWKLLPPLVTAFGVNDQTERPHVVFQNGLTYLFTISHHSTYADGLSGPDGVYGFVSENGIFGPYEPLNGSGLVLGNPSSQPYQAYSHYVMTNGLVTSFIDTIPSSDPNVYRYGGTLAPTIKLELVGHRSFVTEVKGYGYIPPQIEWLAEDESSNSAAALSLLNK</sequence>